<sequence length="351" mass="40193">MKRKVMLTGDRPTGALHLGHYVGSVVNRLKFQEEYETYFIIADLHTLTTKPDLKSINTIPSNVREMVLDYLACGINPDKVSIYLQSAIPELFELHLIFSMIVTVARLQRIPSIKDMSIAAGLKEIPYGLLGYPVLMSADILMTKANLVPVGRDNESHIEFARELARRFNHLYKNNFFPIPESVFTDSRPLVGIYGKNKMSKSLDNAIFLNDDENLLEKKIMSMYTDPNRIRADIPGNVEGNPIFIYHSFFNSNHEEVEDLKSRYKKGKVGDVEVKKKLFLALNSFLKPIRDKRSFYEAKKKDYIDEIIFDGTSKARFIANKVVKDVKDLIGLSKTWNGIKYSAEKKLKNEE</sequence>
<protein>
    <recommendedName>
        <fullName evidence="1">Tryptophan--tRNA ligase</fullName>
        <ecNumber evidence="1">6.1.1.2</ecNumber>
    </recommendedName>
    <alternativeName>
        <fullName evidence="1">Tryptophanyl-tRNA synthetase</fullName>
        <shortName evidence="1">TrpRS</shortName>
    </alternativeName>
</protein>
<evidence type="ECO:0000255" key="1">
    <source>
        <dbReference type="HAMAP-Rule" id="MF_00140"/>
    </source>
</evidence>
<keyword id="KW-0030">Aminoacyl-tRNA synthetase</keyword>
<keyword id="KW-0067">ATP-binding</keyword>
<keyword id="KW-0963">Cytoplasm</keyword>
<keyword id="KW-0436">Ligase</keyword>
<keyword id="KW-0547">Nucleotide-binding</keyword>
<keyword id="KW-0648">Protein biosynthesis</keyword>
<keyword id="KW-1185">Reference proteome</keyword>
<gene>
    <name evidence="1" type="primary">trpS</name>
    <name type="synonym">trsA</name>
    <name type="ordered locus">BB_0005</name>
</gene>
<accession>O51038</accession>
<proteinExistence type="inferred from homology"/>
<dbReference type="EC" id="6.1.1.2" evidence="1"/>
<dbReference type="EMBL" id="AE000783">
    <property type="protein sequence ID" value="AAC66398.2"/>
    <property type="molecule type" value="Genomic_DNA"/>
</dbReference>
<dbReference type="PIR" id="E70100">
    <property type="entry name" value="E70100"/>
</dbReference>
<dbReference type="RefSeq" id="NP_212139.2">
    <property type="nucleotide sequence ID" value="NC_001318.1"/>
</dbReference>
<dbReference type="RefSeq" id="WP_010889658.1">
    <property type="nucleotide sequence ID" value="NC_001318.1"/>
</dbReference>
<dbReference type="SMR" id="O51038"/>
<dbReference type="STRING" id="224326.BB_0005"/>
<dbReference type="PaxDb" id="224326-BB_0005"/>
<dbReference type="EnsemblBacteria" id="AAC66398">
    <property type="protein sequence ID" value="AAC66398"/>
    <property type="gene ID" value="BB_0005"/>
</dbReference>
<dbReference type="KEGG" id="bbu:BB_0005"/>
<dbReference type="PATRIC" id="fig|224326.49.peg.403"/>
<dbReference type="HOGENOM" id="CLU_029244_0_1_12"/>
<dbReference type="OrthoDB" id="9801042at2"/>
<dbReference type="Proteomes" id="UP000001807">
    <property type="component" value="Chromosome"/>
</dbReference>
<dbReference type="GO" id="GO:0005829">
    <property type="term" value="C:cytosol"/>
    <property type="evidence" value="ECO:0007669"/>
    <property type="project" value="TreeGrafter"/>
</dbReference>
<dbReference type="GO" id="GO:0005524">
    <property type="term" value="F:ATP binding"/>
    <property type="evidence" value="ECO:0007669"/>
    <property type="project" value="UniProtKB-UniRule"/>
</dbReference>
<dbReference type="GO" id="GO:0004830">
    <property type="term" value="F:tryptophan-tRNA ligase activity"/>
    <property type="evidence" value="ECO:0007669"/>
    <property type="project" value="UniProtKB-UniRule"/>
</dbReference>
<dbReference type="GO" id="GO:0006436">
    <property type="term" value="P:tryptophanyl-tRNA aminoacylation"/>
    <property type="evidence" value="ECO:0007669"/>
    <property type="project" value="UniProtKB-UniRule"/>
</dbReference>
<dbReference type="CDD" id="cd00806">
    <property type="entry name" value="TrpRS_core"/>
    <property type="match status" value="1"/>
</dbReference>
<dbReference type="FunFam" id="1.10.240.10:FF:000005">
    <property type="entry name" value="Tryptophan--tRNA ligase"/>
    <property type="match status" value="1"/>
</dbReference>
<dbReference type="Gene3D" id="3.40.50.620">
    <property type="entry name" value="HUPs"/>
    <property type="match status" value="1"/>
</dbReference>
<dbReference type="Gene3D" id="1.10.240.10">
    <property type="entry name" value="Tyrosyl-Transfer RNA Synthetase"/>
    <property type="match status" value="1"/>
</dbReference>
<dbReference type="HAMAP" id="MF_00140_B">
    <property type="entry name" value="Trp_tRNA_synth_B"/>
    <property type="match status" value="1"/>
</dbReference>
<dbReference type="InterPro" id="IPR001412">
    <property type="entry name" value="aa-tRNA-synth_I_CS"/>
</dbReference>
<dbReference type="InterPro" id="IPR002305">
    <property type="entry name" value="aa-tRNA-synth_Ic"/>
</dbReference>
<dbReference type="InterPro" id="IPR014729">
    <property type="entry name" value="Rossmann-like_a/b/a_fold"/>
</dbReference>
<dbReference type="InterPro" id="IPR002306">
    <property type="entry name" value="Trp-tRNA-ligase"/>
</dbReference>
<dbReference type="InterPro" id="IPR024109">
    <property type="entry name" value="Trp-tRNA-ligase_bac-type"/>
</dbReference>
<dbReference type="InterPro" id="IPR050203">
    <property type="entry name" value="Trp-tRNA_synthetase"/>
</dbReference>
<dbReference type="NCBIfam" id="TIGR00233">
    <property type="entry name" value="trpS"/>
    <property type="match status" value="1"/>
</dbReference>
<dbReference type="PANTHER" id="PTHR43766">
    <property type="entry name" value="TRYPTOPHAN--TRNA LIGASE, MITOCHONDRIAL"/>
    <property type="match status" value="1"/>
</dbReference>
<dbReference type="PANTHER" id="PTHR43766:SF1">
    <property type="entry name" value="TRYPTOPHAN--TRNA LIGASE, MITOCHONDRIAL"/>
    <property type="match status" value="1"/>
</dbReference>
<dbReference type="Pfam" id="PF00579">
    <property type="entry name" value="tRNA-synt_1b"/>
    <property type="match status" value="1"/>
</dbReference>
<dbReference type="PRINTS" id="PR01039">
    <property type="entry name" value="TRNASYNTHTRP"/>
</dbReference>
<dbReference type="SUPFAM" id="SSF52374">
    <property type="entry name" value="Nucleotidylyl transferase"/>
    <property type="match status" value="1"/>
</dbReference>
<dbReference type="PROSITE" id="PS00178">
    <property type="entry name" value="AA_TRNA_LIGASE_I"/>
    <property type="match status" value="1"/>
</dbReference>
<comment type="function">
    <text evidence="1">Catalyzes the attachment of tryptophan to tRNA(Trp).</text>
</comment>
<comment type="catalytic activity">
    <reaction evidence="1">
        <text>tRNA(Trp) + L-tryptophan + ATP = L-tryptophyl-tRNA(Trp) + AMP + diphosphate + H(+)</text>
        <dbReference type="Rhea" id="RHEA:24080"/>
        <dbReference type="Rhea" id="RHEA-COMP:9671"/>
        <dbReference type="Rhea" id="RHEA-COMP:9705"/>
        <dbReference type="ChEBI" id="CHEBI:15378"/>
        <dbReference type="ChEBI" id="CHEBI:30616"/>
        <dbReference type="ChEBI" id="CHEBI:33019"/>
        <dbReference type="ChEBI" id="CHEBI:57912"/>
        <dbReference type="ChEBI" id="CHEBI:78442"/>
        <dbReference type="ChEBI" id="CHEBI:78535"/>
        <dbReference type="ChEBI" id="CHEBI:456215"/>
        <dbReference type="EC" id="6.1.1.2"/>
    </reaction>
</comment>
<comment type="subunit">
    <text evidence="1">Homodimer.</text>
</comment>
<comment type="subcellular location">
    <subcellularLocation>
        <location evidence="1">Cytoplasm</location>
    </subcellularLocation>
</comment>
<comment type="similarity">
    <text evidence="1">Belongs to the class-I aminoacyl-tRNA synthetase family.</text>
</comment>
<organism>
    <name type="scientific">Borreliella burgdorferi (strain ATCC 35210 / DSM 4680 / CIP 102532 / B31)</name>
    <name type="common">Borrelia burgdorferi</name>
    <dbReference type="NCBI Taxonomy" id="224326"/>
    <lineage>
        <taxon>Bacteria</taxon>
        <taxon>Pseudomonadati</taxon>
        <taxon>Spirochaetota</taxon>
        <taxon>Spirochaetia</taxon>
        <taxon>Spirochaetales</taxon>
        <taxon>Borreliaceae</taxon>
        <taxon>Borreliella</taxon>
    </lineage>
</organism>
<feature type="chain" id="PRO_0000136604" description="Tryptophan--tRNA ligase">
    <location>
        <begin position="1"/>
        <end position="351"/>
    </location>
</feature>
<feature type="short sequence motif" description="'HIGH' region" evidence="1">
    <location>
        <begin position="12"/>
        <end position="20"/>
    </location>
</feature>
<feature type="short sequence motif" description="'KMSKS' region" evidence="1">
    <location>
        <begin position="198"/>
        <end position="202"/>
    </location>
</feature>
<feature type="binding site" evidence="1">
    <location>
        <begin position="11"/>
        <end position="13"/>
    </location>
    <ligand>
        <name>ATP</name>
        <dbReference type="ChEBI" id="CHEBI:30616"/>
    </ligand>
</feature>
<feature type="binding site" evidence="1">
    <location>
        <begin position="19"/>
        <end position="20"/>
    </location>
    <ligand>
        <name>ATP</name>
        <dbReference type="ChEBI" id="CHEBI:30616"/>
    </ligand>
</feature>
<feature type="binding site" evidence="1">
    <location>
        <position position="139"/>
    </location>
    <ligand>
        <name>L-tryptophan</name>
        <dbReference type="ChEBI" id="CHEBI:57912"/>
    </ligand>
</feature>
<feature type="binding site" evidence="1">
    <location>
        <begin position="151"/>
        <end position="153"/>
    </location>
    <ligand>
        <name>ATP</name>
        <dbReference type="ChEBI" id="CHEBI:30616"/>
    </ligand>
</feature>
<feature type="binding site" evidence="1">
    <location>
        <position position="190"/>
    </location>
    <ligand>
        <name>ATP</name>
        <dbReference type="ChEBI" id="CHEBI:30616"/>
    </ligand>
</feature>
<feature type="binding site" evidence="1">
    <location>
        <begin position="198"/>
        <end position="202"/>
    </location>
    <ligand>
        <name>ATP</name>
        <dbReference type="ChEBI" id="CHEBI:30616"/>
    </ligand>
</feature>
<name>SYW_BORBU</name>
<reference key="1">
    <citation type="journal article" date="1997" name="Nature">
        <title>Genomic sequence of a Lyme disease spirochaete, Borrelia burgdorferi.</title>
        <authorList>
            <person name="Fraser C.M."/>
            <person name="Casjens S."/>
            <person name="Huang W.M."/>
            <person name="Sutton G.G."/>
            <person name="Clayton R.A."/>
            <person name="Lathigra R."/>
            <person name="White O."/>
            <person name="Ketchum K.A."/>
            <person name="Dodson R.J."/>
            <person name="Hickey E.K."/>
            <person name="Gwinn M.L."/>
            <person name="Dougherty B.A."/>
            <person name="Tomb J.-F."/>
            <person name="Fleischmann R.D."/>
            <person name="Richardson D.L."/>
            <person name="Peterson J.D."/>
            <person name="Kerlavage A.R."/>
            <person name="Quackenbush J."/>
            <person name="Salzberg S.L."/>
            <person name="Hanson M."/>
            <person name="van Vugt R."/>
            <person name="Palmer N."/>
            <person name="Adams M.D."/>
            <person name="Gocayne J.D."/>
            <person name="Weidman J.F."/>
            <person name="Utterback T.R."/>
            <person name="Watthey L."/>
            <person name="McDonald L.A."/>
            <person name="Artiach P."/>
            <person name="Bowman C."/>
            <person name="Garland S.A."/>
            <person name="Fujii C."/>
            <person name="Cotton M.D."/>
            <person name="Horst K."/>
            <person name="Roberts K.M."/>
            <person name="Hatch B."/>
            <person name="Smith H.O."/>
            <person name="Venter J.C."/>
        </authorList>
    </citation>
    <scope>NUCLEOTIDE SEQUENCE [LARGE SCALE GENOMIC DNA]</scope>
    <source>
        <strain>ATCC 35210 / DSM 4680 / CIP 102532 / B31</strain>
    </source>
</reference>